<evidence type="ECO:0000255" key="1">
    <source>
        <dbReference type="HAMAP-Rule" id="MF_00373"/>
    </source>
</evidence>
<evidence type="ECO:0000256" key="2">
    <source>
        <dbReference type="SAM" id="MobiDB-lite"/>
    </source>
</evidence>
<evidence type="ECO:0000305" key="3"/>
<accession>B2GG84</accession>
<organism>
    <name type="scientific">Kocuria rhizophila (strain ATCC 9341 / DSM 348 / NBRC 103217 / DC2201)</name>
    <dbReference type="NCBI Taxonomy" id="378753"/>
    <lineage>
        <taxon>Bacteria</taxon>
        <taxon>Bacillati</taxon>
        <taxon>Actinomycetota</taxon>
        <taxon>Actinomycetes</taxon>
        <taxon>Micrococcales</taxon>
        <taxon>Micrococcaceae</taxon>
        <taxon>Kocuria</taxon>
    </lineage>
</organism>
<comment type="similarity">
    <text evidence="1">Belongs to the bacterial ribosomal protein bL28 family.</text>
</comment>
<dbReference type="EMBL" id="AP009152">
    <property type="protein sequence ID" value="BAG28707.1"/>
    <property type="molecule type" value="Genomic_DNA"/>
</dbReference>
<dbReference type="RefSeq" id="WP_012397434.1">
    <property type="nucleotide sequence ID" value="NZ_VECX01000002.1"/>
</dbReference>
<dbReference type="SMR" id="B2GG84"/>
<dbReference type="STRING" id="378753.KRH_03600"/>
<dbReference type="GeneID" id="93241306"/>
<dbReference type="KEGG" id="krh:KRH_03600"/>
<dbReference type="eggNOG" id="COG0227">
    <property type="taxonomic scope" value="Bacteria"/>
</dbReference>
<dbReference type="HOGENOM" id="CLU_064548_3_1_11"/>
<dbReference type="OrthoDB" id="9805609at2"/>
<dbReference type="Proteomes" id="UP000008838">
    <property type="component" value="Chromosome"/>
</dbReference>
<dbReference type="GO" id="GO:1990904">
    <property type="term" value="C:ribonucleoprotein complex"/>
    <property type="evidence" value="ECO:0007669"/>
    <property type="project" value="UniProtKB-KW"/>
</dbReference>
<dbReference type="GO" id="GO:0005840">
    <property type="term" value="C:ribosome"/>
    <property type="evidence" value="ECO:0007669"/>
    <property type="project" value="UniProtKB-KW"/>
</dbReference>
<dbReference type="GO" id="GO:0003735">
    <property type="term" value="F:structural constituent of ribosome"/>
    <property type="evidence" value="ECO:0007669"/>
    <property type="project" value="InterPro"/>
</dbReference>
<dbReference type="GO" id="GO:0006412">
    <property type="term" value="P:translation"/>
    <property type="evidence" value="ECO:0007669"/>
    <property type="project" value="UniProtKB-UniRule"/>
</dbReference>
<dbReference type="FunFam" id="2.30.170.40:FF:000001">
    <property type="entry name" value="50S ribosomal protein L28"/>
    <property type="match status" value="1"/>
</dbReference>
<dbReference type="Gene3D" id="2.30.170.40">
    <property type="entry name" value="Ribosomal protein L28/L24"/>
    <property type="match status" value="1"/>
</dbReference>
<dbReference type="HAMAP" id="MF_00373">
    <property type="entry name" value="Ribosomal_bL28"/>
    <property type="match status" value="1"/>
</dbReference>
<dbReference type="InterPro" id="IPR026569">
    <property type="entry name" value="Ribosomal_bL28"/>
</dbReference>
<dbReference type="InterPro" id="IPR034704">
    <property type="entry name" value="Ribosomal_bL28/bL31-like_sf"/>
</dbReference>
<dbReference type="InterPro" id="IPR001383">
    <property type="entry name" value="Ribosomal_bL28_bact-type"/>
</dbReference>
<dbReference type="InterPro" id="IPR037147">
    <property type="entry name" value="Ribosomal_bL28_sf"/>
</dbReference>
<dbReference type="NCBIfam" id="TIGR00009">
    <property type="entry name" value="L28"/>
    <property type="match status" value="1"/>
</dbReference>
<dbReference type="PANTHER" id="PTHR13528">
    <property type="entry name" value="39S RIBOSOMAL PROTEIN L28, MITOCHONDRIAL"/>
    <property type="match status" value="1"/>
</dbReference>
<dbReference type="PANTHER" id="PTHR13528:SF2">
    <property type="entry name" value="LARGE RIBOSOMAL SUBUNIT PROTEIN BL28M"/>
    <property type="match status" value="1"/>
</dbReference>
<dbReference type="Pfam" id="PF00830">
    <property type="entry name" value="Ribosomal_L28"/>
    <property type="match status" value="1"/>
</dbReference>
<dbReference type="SUPFAM" id="SSF143800">
    <property type="entry name" value="L28p-like"/>
    <property type="match status" value="1"/>
</dbReference>
<protein>
    <recommendedName>
        <fullName evidence="1">Large ribosomal subunit protein bL28</fullName>
    </recommendedName>
    <alternativeName>
        <fullName evidence="3">50S ribosomal protein L28</fullName>
    </alternativeName>
</protein>
<keyword id="KW-1185">Reference proteome</keyword>
<keyword id="KW-0687">Ribonucleoprotein</keyword>
<keyword id="KW-0689">Ribosomal protein</keyword>
<reference key="1">
    <citation type="journal article" date="2008" name="J. Bacteriol.">
        <title>Complete genome sequence of the soil actinomycete Kocuria rhizophila.</title>
        <authorList>
            <person name="Takarada H."/>
            <person name="Sekine M."/>
            <person name="Kosugi H."/>
            <person name="Matsuo Y."/>
            <person name="Fujisawa T."/>
            <person name="Omata S."/>
            <person name="Kishi E."/>
            <person name="Shimizu A."/>
            <person name="Tsukatani N."/>
            <person name="Tanikawa S."/>
            <person name="Fujita N."/>
            <person name="Harayama S."/>
        </authorList>
    </citation>
    <scope>NUCLEOTIDE SEQUENCE [LARGE SCALE GENOMIC DNA]</scope>
    <source>
        <strain>ATCC 9341 / DSM 348 / NBRC 103217 / DC2201</strain>
    </source>
</reference>
<gene>
    <name evidence="1" type="primary">rpmB</name>
    <name type="ordered locus">KRH_03600</name>
</gene>
<name>RL28_KOCRD</name>
<proteinExistence type="inferred from homology"/>
<feature type="chain" id="PRO_1000121647" description="Large ribosomal subunit protein bL28">
    <location>
        <begin position="1"/>
        <end position="78"/>
    </location>
</feature>
<feature type="region of interest" description="Disordered" evidence="2">
    <location>
        <begin position="1"/>
        <end position="30"/>
    </location>
</feature>
<feature type="compositionally biased region" description="Basic residues" evidence="2">
    <location>
        <begin position="19"/>
        <end position="30"/>
    </location>
</feature>
<sequence length="78" mass="8811">MAAHCQVTGAQPGFGHSISHSHRRTKRRWNPNIQKKRYWVPSLRRNVTLNLSAKGIKVIDARGIDAVVNELIARGEKI</sequence>